<gene>
    <name evidence="2" type="primary">rpmA</name>
    <name type="ordered locus">SERP1209</name>
</gene>
<name>RL27_STAEQ</name>
<comment type="PTM">
    <text evidence="1">The N-terminus is cleaved by ribosomal processing cysteine protease Prp.</text>
</comment>
<comment type="similarity">
    <text evidence="2">Belongs to the bacterial ribosomal protein bL27 family.</text>
</comment>
<feature type="propeptide" id="PRO_0000459942" evidence="1">
    <location>
        <begin position="1"/>
        <end position="9"/>
    </location>
</feature>
<feature type="chain" id="PRO_0000181171" description="Large ribosomal subunit protein bL27">
    <location>
        <begin position="10"/>
        <end position="94"/>
    </location>
</feature>
<protein>
    <recommendedName>
        <fullName evidence="2">Large ribosomal subunit protein bL27</fullName>
    </recommendedName>
    <alternativeName>
        <fullName evidence="3">50S ribosomal protein L27</fullName>
    </alternativeName>
</protein>
<accession>Q5HNQ6</accession>
<dbReference type="EMBL" id="CP000029">
    <property type="protein sequence ID" value="AAW54602.1"/>
    <property type="molecule type" value="Genomic_DNA"/>
</dbReference>
<dbReference type="RefSeq" id="WP_001830822.1">
    <property type="nucleotide sequence ID" value="NC_002976.3"/>
</dbReference>
<dbReference type="SMR" id="Q5HNQ6"/>
<dbReference type="STRING" id="176279.SERP1209"/>
<dbReference type="GeneID" id="93669336"/>
<dbReference type="KEGG" id="ser:SERP1209"/>
<dbReference type="eggNOG" id="COG0211">
    <property type="taxonomic scope" value="Bacteria"/>
</dbReference>
<dbReference type="HOGENOM" id="CLU_095424_4_0_9"/>
<dbReference type="Proteomes" id="UP000000531">
    <property type="component" value="Chromosome"/>
</dbReference>
<dbReference type="GO" id="GO:0022625">
    <property type="term" value="C:cytosolic large ribosomal subunit"/>
    <property type="evidence" value="ECO:0007669"/>
    <property type="project" value="TreeGrafter"/>
</dbReference>
<dbReference type="GO" id="GO:0003735">
    <property type="term" value="F:structural constituent of ribosome"/>
    <property type="evidence" value="ECO:0007669"/>
    <property type="project" value="InterPro"/>
</dbReference>
<dbReference type="GO" id="GO:0006412">
    <property type="term" value="P:translation"/>
    <property type="evidence" value="ECO:0007669"/>
    <property type="project" value="UniProtKB-UniRule"/>
</dbReference>
<dbReference type="FunFam" id="2.40.50.100:FF:000004">
    <property type="entry name" value="50S ribosomal protein L27"/>
    <property type="match status" value="1"/>
</dbReference>
<dbReference type="Gene3D" id="2.40.50.100">
    <property type="match status" value="1"/>
</dbReference>
<dbReference type="HAMAP" id="MF_00539">
    <property type="entry name" value="Ribosomal_bL27"/>
    <property type="match status" value="1"/>
</dbReference>
<dbReference type="InterPro" id="IPR001684">
    <property type="entry name" value="Ribosomal_bL27"/>
</dbReference>
<dbReference type="InterPro" id="IPR018261">
    <property type="entry name" value="Ribosomal_bL27_CS"/>
</dbReference>
<dbReference type="NCBIfam" id="TIGR00062">
    <property type="entry name" value="L27"/>
    <property type="match status" value="1"/>
</dbReference>
<dbReference type="PANTHER" id="PTHR15893:SF0">
    <property type="entry name" value="LARGE RIBOSOMAL SUBUNIT PROTEIN BL27M"/>
    <property type="match status" value="1"/>
</dbReference>
<dbReference type="PANTHER" id="PTHR15893">
    <property type="entry name" value="RIBOSOMAL PROTEIN L27"/>
    <property type="match status" value="1"/>
</dbReference>
<dbReference type="Pfam" id="PF01016">
    <property type="entry name" value="Ribosomal_L27"/>
    <property type="match status" value="1"/>
</dbReference>
<dbReference type="PRINTS" id="PR00063">
    <property type="entry name" value="RIBOSOMALL27"/>
</dbReference>
<dbReference type="SUPFAM" id="SSF110324">
    <property type="entry name" value="Ribosomal L27 protein-like"/>
    <property type="match status" value="1"/>
</dbReference>
<dbReference type="PROSITE" id="PS00831">
    <property type="entry name" value="RIBOSOMAL_L27"/>
    <property type="match status" value="1"/>
</dbReference>
<proteinExistence type="inferred from homology"/>
<organism>
    <name type="scientific">Staphylococcus epidermidis (strain ATCC 35984 / DSM 28319 / BCRC 17069 / CCUG 31568 / BM 3577 / RP62A)</name>
    <dbReference type="NCBI Taxonomy" id="176279"/>
    <lineage>
        <taxon>Bacteria</taxon>
        <taxon>Bacillati</taxon>
        <taxon>Bacillota</taxon>
        <taxon>Bacilli</taxon>
        <taxon>Bacillales</taxon>
        <taxon>Staphylococcaceae</taxon>
        <taxon>Staphylococcus</taxon>
    </lineage>
</organism>
<evidence type="ECO:0000250" key="1">
    <source>
        <dbReference type="UniProtKB" id="Q2FXT0"/>
    </source>
</evidence>
<evidence type="ECO:0000255" key="2">
    <source>
        <dbReference type="HAMAP-Rule" id="MF_00539"/>
    </source>
</evidence>
<evidence type="ECO:0000305" key="3"/>
<keyword id="KW-1185">Reference proteome</keyword>
<keyword id="KW-0687">Ribonucleoprotein</keyword>
<keyword id="KW-0689">Ribosomal protein</keyword>
<reference key="1">
    <citation type="journal article" date="2005" name="J. Bacteriol.">
        <title>Insights on evolution of virulence and resistance from the complete genome analysis of an early methicillin-resistant Staphylococcus aureus strain and a biofilm-producing methicillin-resistant Staphylococcus epidermidis strain.</title>
        <authorList>
            <person name="Gill S.R."/>
            <person name="Fouts D.E."/>
            <person name="Archer G.L."/>
            <person name="Mongodin E.F."/>
            <person name="DeBoy R.T."/>
            <person name="Ravel J."/>
            <person name="Paulsen I.T."/>
            <person name="Kolonay J.F."/>
            <person name="Brinkac L.M."/>
            <person name="Beanan M.J."/>
            <person name="Dodson R.J."/>
            <person name="Daugherty S.C."/>
            <person name="Madupu R."/>
            <person name="Angiuoli S.V."/>
            <person name="Durkin A.S."/>
            <person name="Haft D.H."/>
            <person name="Vamathevan J.J."/>
            <person name="Khouri H."/>
            <person name="Utterback T.R."/>
            <person name="Lee C."/>
            <person name="Dimitrov G."/>
            <person name="Jiang L."/>
            <person name="Qin H."/>
            <person name="Weidman J."/>
            <person name="Tran K."/>
            <person name="Kang K.H."/>
            <person name="Hance I.R."/>
            <person name="Nelson K.E."/>
            <person name="Fraser C.M."/>
        </authorList>
    </citation>
    <scope>NUCLEOTIDE SEQUENCE [LARGE SCALE GENOMIC DNA]</scope>
    <source>
        <strain>ATCC 35984 / DSM 28319 / BCRC 17069 / CCUG 31568 / BM 3577 / RP62A</strain>
    </source>
</reference>
<sequence>MLKLNLQFFASKKGVSSTKNGRDSESKRLGAKRADGQYVSGGSILYRQRGTKIYPGENVGRGGDDTLFAKIDGVVKFERKGRDKKQVSVYAVAE</sequence>